<keyword id="KW-0028">Amino-acid biosynthesis</keyword>
<keyword id="KW-0963">Cytoplasm</keyword>
<keyword id="KW-0368">Histidine biosynthesis</keyword>
<keyword id="KW-0456">Lyase</keyword>
<keyword id="KW-1185">Reference proteome</keyword>
<organism>
    <name type="scientific">Syntrophomonas wolfei subsp. wolfei (strain DSM 2245B / Goettingen)</name>
    <dbReference type="NCBI Taxonomy" id="335541"/>
    <lineage>
        <taxon>Bacteria</taxon>
        <taxon>Bacillati</taxon>
        <taxon>Bacillota</taxon>
        <taxon>Clostridia</taxon>
        <taxon>Eubacteriales</taxon>
        <taxon>Syntrophomonadaceae</taxon>
        <taxon>Syntrophomonas</taxon>
    </lineage>
</organism>
<sequence>MRAKRIIPCLDVHGGRVVKGTNFINLRDAGDPVEFAAFYDKEGADELVFLDISATSEERQTMVEVVRQTAREVSIPFAVGGGIRTLDDISNILKAGADKVSMNSAAIRDPQIIKEGAVKFGSQCIVVAIDARRISENSWEVYIDGGQVATGMDAREWARKVESLGAGEILLTSMDKDGTKDGYDIELTAAISEQVGIPVIASGGAGKLEHLYEAITQGKADAVLCASIFHFREYTVRQAKEYLAAKGVAVRL</sequence>
<reference key="1">
    <citation type="journal article" date="2010" name="Environ. Microbiol.">
        <title>The genome of Syntrophomonas wolfei: new insights into syntrophic metabolism and biohydrogen production.</title>
        <authorList>
            <person name="Sieber J.R."/>
            <person name="Sims D.R."/>
            <person name="Han C."/>
            <person name="Kim E."/>
            <person name="Lykidis A."/>
            <person name="Lapidus A.L."/>
            <person name="McDonnald E."/>
            <person name="Rohlin L."/>
            <person name="Culley D.E."/>
            <person name="Gunsalus R."/>
            <person name="McInerney M.J."/>
        </authorList>
    </citation>
    <scope>NUCLEOTIDE SEQUENCE [LARGE SCALE GENOMIC DNA]</scope>
    <source>
        <strain>DSM 2245B / Goettingen</strain>
    </source>
</reference>
<name>HIS6_SYNWW</name>
<comment type="function">
    <text evidence="1">IGPS catalyzes the conversion of PRFAR and glutamine to IGP, AICAR and glutamate. The HisF subunit catalyzes the cyclization activity that produces IGP and AICAR from PRFAR using the ammonia provided by the HisH subunit.</text>
</comment>
<comment type="catalytic activity">
    <reaction evidence="1">
        <text>5-[(5-phospho-1-deoxy-D-ribulos-1-ylimino)methylamino]-1-(5-phospho-beta-D-ribosyl)imidazole-4-carboxamide + L-glutamine = D-erythro-1-(imidazol-4-yl)glycerol 3-phosphate + 5-amino-1-(5-phospho-beta-D-ribosyl)imidazole-4-carboxamide + L-glutamate + H(+)</text>
        <dbReference type="Rhea" id="RHEA:24793"/>
        <dbReference type="ChEBI" id="CHEBI:15378"/>
        <dbReference type="ChEBI" id="CHEBI:29985"/>
        <dbReference type="ChEBI" id="CHEBI:58278"/>
        <dbReference type="ChEBI" id="CHEBI:58359"/>
        <dbReference type="ChEBI" id="CHEBI:58475"/>
        <dbReference type="ChEBI" id="CHEBI:58525"/>
        <dbReference type="EC" id="4.3.2.10"/>
    </reaction>
</comment>
<comment type="pathway">
    <text evidence="1">Amino-acid biosynthesis; L-histidine biosynthesis; L-histidine from 5-phospho-alpha-D-ribose 1-diphosphate: step 5/9.</text>
</comment>
<comment type="subunit">
    <text evidence="1">Heterodimer of HisH and HisF.</text>
</comment>
<comment type="subcellular location">
    <subcellularLocation>
        <location evidence="1">Cytoplasm</location>
    </subcellularLocation>
</comment>
<comment type="similarity">
    <text evidence="1">Belongs to the HisA/HisF family.</text>
</comment>
<proteinExistence type="inferred from homology"/>
<gene>
    <name evidence="1" type="primary">hisF</name>
    <name type="ordered locus">Swol_1765</name>
</gene>
<feature type="chain" id="PRO_1000063167" description="Imidazole glycerol phosphate synthase subunit HisF">
    <location>
        <begin position="1"/>
        <end position="252"/>
    </location>
</feature>
<feature type="active site" evidence="1">
    <location>
        <position position="11"/>
    </location>
</feature>
<feature type="active site" evidence="1">
    <location>
        <position position="130"/>
    </location>
</feature>
<dbReference type="EC" id="4.3.2.10" evidence="1"/>
<dbReference type="EMBL" id="CP000448">
    <property type="protein sequence ID" value="ABI69063.1"/>
    <property type="molecule type" value="Genomic_DNA"/>
</dbReference>
<dbReference type="RefSeq" id="WP_011641158.1">
    <property type="nucleotide sequence ID" value="NC_008346.1"/>
</dbReference>
<dbReference type="SMR" id="Q0AW41"/>
<dbReference type="STRING" id="335541.Swol_1765"/>
<dbReference type="KEGG" id="swo:Swol_1765"/>
<dbReference type="eggNOG" id="COG0107">
    <property type="taxonomic scope" value="Bacteria"/>
</dbReference>
<dbReference type="HOGENOM" id="CLU_048577_4_0_9"/>
<dbReference type="OrthoDB" id="9781903at2"/>
<dbReference type="UniPathway" id="UPA00031">
    <property type="reaction ID" value="UER00010"/>
</dbReference>
<dbReference type="Proteomes" id="UP000001968">
    <property type="component" value="Chromosome"/>
</dbReference>
<dbReference type="GO" id="GO:0005737">
    <property type="term" value="C:cytoplasm"/>
    <property type="evidence" value="ECO:0007669"/>
    <property type="project" value="UniProtKB-SubCell"/>
</dbReference>
<dbReference type="GO" id="GO:0000107">
    <property type="term" value="F:imidazoleglycerol-phosphate synthase activity"/>
    <property type="evidence" value="ECO:0007669"/>
    <property type="project" value="UniProtKB-UniRule"/>
</dbReference>
<dbReference type="GO" id="GO:0016829">
    <property type="term" value="F:lyase activity"/>
    <property type="evidence" value="ECO:0007669"/>
    <property type="project" value="UniProtKB-KW"/>
</dbReference>
<dbReference type="GO" id="GO:0000105">
    <property type="term" value="P:L-histidine biosynthetic process"/>
    <property type="evidence" value="ECO:0007669"/>
    <property type="project" value="UniProtKB-UniRule"/>
</dbReference>
<dbReference type="CDD" id="cd04731">
    <property type="entry name" value="HisF"/>
    <property type="match status" value="1"/>
</dbReference>
<dbReference type="FunFam" id="3.20.20.70:FF:000006">
    <property type="entry name" value="Imidazole glycerol phosphate synthase subunit HisF"/>
    <property type="match status" value="1"/>
</dbReference>
<dbReference type="Gene3D" id="3.20.20.70">
    <property type="entry name" value="Aldolase class I"/>
    <property type="match status" value="1"/>
</dbReference>
<dbReference type="HAMAP" id="MF_01013">
    <property type="entry name" value="HisF"/>
    <property type="match status" value="1"/>
</dbReference>
<dbReference type="InterPro" id="IPR013785">
    <property type="entry name" value="Aldolase_TIM"/>
</dbReference>
<dbReference type="InterPro" id="IPR006062">
    <property type="entry name" value="His_biosynth"/>
</dbReference>
<dbReference type="InterPro" id="IPR004651">
    <property type="entry name" value="HisF"/>
</dbReference>
<dbReference type="InterPro" id="IPR050064">
    <property type="entry name" value="IGPS_HisA/HisF"/>
</dbReference>
<dbReference type="InterPro" id="IPR011060">
    <property type="entry name" value="RibuloseP-bd_barrel"/>
</dbReference>
<dbReference type="NCBIfam" id="TIGR00735">
    <property type="entry name" value="hisF"/>
    <property type="match status" value="1"/>
</dbReference>
<dbReference type="PANTHER" id="PTHR21235:SF2">
    <property type="entry name" value="IMIDAZOLE GLYCEROL PHOSPHATE SYNTHASE HISHF"/>
    <property type="match status" value="1"/>
</dbReference>
<dbReference type="PANTHER" id="PTHR21235">
    <property type="entry name" value="IMIDAZOLE GLYCEROL PHOSPHATE SYNTHASE SUBUNIT HISF/H IGP SYNTHASE SUBUNIT HISF/H"/>
    <property type="match status" value="1"/>
</dbReference>
<dbReference type="Pfam" id="PF00977">
    <property type="entry name" value="His_biosynth"/>
    <property type="match status" value="1"/>
</dbReference>
<dbReference type="SUPFAM" id="SSF51366">
    <property type="entry name" value="Ribulose-phoshate binding barrel"/>
    <property type="match status" value="1"/>
</dbReference>
<protein>
    <recommendedName>
        <fullName evidence="1">Imidazole glycerol phosphate synthase subunit HisF</fullName>
        <ecNumber evidence="1">4.3.2.10</ecNumber>
    </recommendedName>
    <alternativeName>
        <fullName evidence="1">IGP synthase cyclase subunit</fullName>
    </alternativeName>
    <alternativeName>
        <fullName evidence="1">IGP synthase subunit HisF</fullName>
    </alternativeName>
    <alternativeName>
        <fullName evidence="1">ImGP synthase subunit HisF</fullName>
        <shortName evidence="1">IGPS subunit HisF</shortName>
    </alternativeName>
</protein>
<accession>Q0AW41</accession>
<evidence type="ECO:0000255" key="1">
    <source>
        <dbReference type="HAMAP-Rule" id="MF_01013"/>
    </source>
</evidence>